<dbReference type="EMBL" id="AL123456">
    <property type="protein sequence ID" value="CCP46641.1"/>
    <property type="molecule type" value="Genomic_DNA"/>
</dbReference>
<dbReference type="RefSeq" id="WP_003420809.1">
    <property type="nucleotide sequence ID" value="NZ_NVQJ01000022.1"/>
</dbReference>
<dbReference type="RefSeq" id="YP_178019.1">
    <property type="nucleotide sequence ID" value="NC_000962.3"/>
</dbReference>
<dbReference type="STRING" id="83332.Rv3812"/>
<dbReference type="PaxDb" id="83332-Rv3812"/>
<dbReference type="DNASU" id="886143"/>
<dbReference type="GeneID" id="886143"/>
<dbReference type="KEGG" id="mtu:Rv3812"/>
<dbReference type="KEGG" id="mtv:RVBD_3812"/>
<dbReference type="PATRIC" id="fig|83332.111.peg.4237"/>
<dbReference type="TubercuList" id="Rv3812"/>
<dbReference type="eggNOG" id="COG0657">
    <property type="taxonomic scope" value="Bacteria"/>
</dbReference>
<dbReference type="InParanoid" id="L7N680"/>
<dbReference type="OrthoDB" id="4752283at2"/>
<dbReference type="PhylomeDB" id="L7N680"/>
<dbReference type="Proteomes" id="UP000001584">
    <property type="component" value="Chromosome"/>
</dbReference>
<dbReference type="GO" id="GO:0005576">
    <property type="term" value="C:extracellular region"/>
    <property type="evidence" value="ECO:0007669"/>
    <property type="project" value="UniProtKB-KW"/>
</dbReference>
<dbReference type="GO" id="GO:0141158">
    <property type="term" value="P:symbiont-mediated suppression of host phagosome maturation"/>
    <property type="evidence" value="ECO:0000269"/>
    <property type="project" value="SigSci"/>
</dbReference>
<dbReference type="FunFam" id="1.10.287.850:FF:000001">
    <property type="entry name" value="PE_PGRS39"/>
    <property type="match status" value="1"/>
</dbReference>
<dbReference type="Gene3D" id="1.10.287.850">
    <property type="entry name" value="HP0062-like domain"/>
    <property type="match status" value="1"/>
</dbReference>
<dbReference type="InterPro" id="IPR000084">
    <property type="entry name" value="PE-PGRS_N"/>
</dbReference>
<dbReference type="Pfam" id="PF00934">
    <property type="entry name" value="PE"/>
    <property type="match status" value="1"/>
</dbReference>
<dbReference type="SUPFAM" id="SSF140459">
    <property type="entry name" value="PE/PPE dimer-like"/>
    <property type="match status" value="1"/>
</dbReference>
<proteinExistence type="evidence at protein level"/>
<name>PG62_MYCTU</name>
<keyword id="KW-0134">Cell wall</keyword>
<keyword id="KW-1185">Reference proteome</keyword>
<keyword id="KW-0964">Secreted</keyword>
<keyword id="KW-0843">Virulence</keyword>
<reference key="1">
    <citation type="journal article" date="1998" name="Nature">
        <title>Deciphering the biology of Mycobacterium tuberculosis from the complete genome sequence.</title>
        <authorList>
            <person name="Cole S.T."/>
            <person name="Brosch R."/>
            <person name="Parkhill J."/>
            <person name="Garnier T."/>
            <person name="Churcher C.M."/>
            <person name="Harris D.E."/>
            <person name="Gordon S.V."/>
            <person name="Eiglmeier K."/>
            <person name="Gas S."/>
            <person name="Barry C.E. III"/>
            <person name="Tekaia F."/>
            <person name="Badcock K."/>
            <person name="Basham D."/>
            <person name="Brown D."/>
            <person name="Chillingworth T."/>
            <person name="Connor R."/>
            <person name="Davies R.M."/>
            <person name="Devlin K."/>
            <person name="Feltwell T."/>
            <person name="Gentles S."/>
            <person name="Hamlin N."/>
            <person name="Holroyd S."/>
            <person name="Hornsby T."/>
            <person name="Jagels K."/>
            <person name="Krogh A."/>
            <person name="McLean J."/>
            <person name="Moule S."/>
            <person name="Murphy L.D."/>
            <person name="Oliver S."/>
            <person name="Osborne J."/>
            <person name="Quail M.A."/>
            <person name="Rajandream M.A."/>
            <person name="Rogers J."/>
            <person name="Rutter S."/>
            <person name="Seeger K."/>
            <person name="Skelton S."/>
            <person name="Squares S."/>
            <person name="Squares R."/>
            <person name="Sulston J.E."/>
            <person name="Taylor K."/>
            <person name="Whitehead S."/>
            <person name="Barrell B.G."/>
        </authorList>
    </citation>
    <scope>NUCLEOTIDE SEQUENCE [LARGE SCALE GENOMIC DNA]</scope>
    <source>
        <strain>ATCC 25618 / H37Rv</strain>
    </source>
</reference>
<reference key="2">
    <citation type="journal article" date="2008" name="J. Med. Microbiol.">
        <title>Characterization of T-cell immunogenicity of two PE/PPE proteins of Mycobacterium tuberculosis.</title>
        <authorList>
            <person name="Chaitra M.G."/>
            <person name="Shaila M.S."/>
            <person name="Nayak R."/>
        </authorList>
    </citation>
    <scope>BIOTECHNOLOGY</scope>
    <source>
        <strain>H37Rv</strain>
    </source>
</reference>
<reference key="3">
    <citation type="journal article" date="2013" name="Cell. Microbiol.">
        <title>Identification of the Mycobacterium tuberculosis protein PE-PGRS62 as a novel effector that functions to block phagosome maturation and inhibit iNOS expression.</title>
        <authorList>
            <person name="Thi E.P."/>
            <person name="Hong C.J."/>
            <person name="Sanghera G."/>
            <person name="Reiner N.E."/>
        </authorList>
    </citation>
    <scope>FUNCTION</scope>
    <scope>EXPRESSION IN M.SMEGMATIS</scope>
    <scope>SUBCELLULAR LOCATION</scope>
</reference>
<reference key="4">
    <citation type="journal article" date="2013" name="J. Infect. Dis.">
        <title>Mycobacterium tuberculosis cell wall-associated Rv3812 protein induces strong dendritic cell-mediated interferon gamma responses and exhibits vaccine potential.</title>
        <authorList>
            <person name="Vani J."/>
            <person name="Shaila M.S."/>
            <person name="Trinath J."/>
            <person name="Balaji K.N."/>
            <person name="Kaveri S.V."/>
            <person name="Bayry J."/>
        </authorList>
    </citation>
    <scope>INTERACTION WITH HOST TLR2</scope>
    <scope>BIOTECHNOLOGY</scope>
</reference>
<reference key="5">
    <citation type="journal article" date="2019" name="J. Cell. Physiol.">
        <title>PE_PGRS62 promotes the survival of Mycobacterium smegmatis within macrophages via disrupting ER stress-mediated apoptosis.</title>
        <authorList>
            <person name="Long Q."/>
            <person name="Xiang X."/>
            <person name="Yin Q."/>
            <person name="Li S."/>
            <person name="Yang W."/>
            <person name="Sun H."/>
            <person name="Liu Q."/>
            <person name="Xie J."/>
            <person name="Deng W."/>
        </authorList>
    </citation>
    <scope>FUNCTION</scope>
    <scope>EXPRESSION IN M.SMEGMATIS</scope>
    <source>
        <strain>H37Rv</strain>
    </source>
</reference>
<comment type="function">
    <text evidence="3 5">Supports mycobacterial virulence via inhibition of phagosome maturation and host inducible nitric oxide synthase (iNOS) expression (PubMed:23167250). May promote the survival within macrophages by disturbing the cytokines profiles and blocking the endoplasmic reticulum (ER) stress-mediated apoptosis (PubMed:30937925). May also affect bacterial cell wall composition (PubMed:23167250).</text>
</comment>
<comment type="function">
    <text evidence="3 5">Expression in Mycobacterium smegmatis, a nonpathogenic species naturally deficient in PE_PGRS genes, results in enhanced resistance to various in vitro stresses (PubMed:30937925). It also leads to phagosome maturation arrest and increased survival in macrophages (PubMed:23167250, PubMed:30937925).</text>
</comment>
<comment type="subunit">
    <text evidence="4">Interacts with host Toll-like receptor 2 (TLR2).</text>
</comment>
<comment type="subcellular location">
    <subcellularLocation>
        <location evidence="3">Secreted</location>
        <location evidence="3">Cell wall</location>
    </subcellularLocation>
</comment>
<comment type="biotechnology">
    <text evidence="2 4">Exhibits vaccine potential (PubMed:18719176, PubMed:23788727). Immunogenicity is demonstrated in BALB/c mice (PubMed:18719176). Interaction with TLR2 induces activation of human dendritic cells (DCs) (PubMed:23788727). Immunization with this protein induces a significant number of CD8+ T cells and a strong Th1-type response, with high gamma interferon (IFN-gamma) and low interleukin-4 responses, and activation of the bactericidal activity of macrophages. Identified T-cell epitopes may contribute to immunity against tuberculosis if included in a vaccine (PubMed:18719176).</text>
</comment>
<comment type="similarity">
    <text evidence="6">Belongs to the mycobacterial PE family. PGRS subfamily.</text>
</comment>
<protein>
    <recommendedName>
        <fullName evidence="6">PE-PGRS family protein PE_PGRS62</fullName>
    </recommendedName>
</protein>
<gene>
    <name evidence="7" type="primary">PE_PGRS62</name>
    <name evidence="7" type="ordered locus">Rv3812</name>
</gene>
<organism>
    <name type="scientific">Mycobacterium tuberculosis (strain ATCC 25618 / H37Rv)</name>
    <dbReference type="NCBI Taxonomy" id="83332"/>
    <lineage>
        <taxon>Bacteria</taxon>
        <taxon>Bacillati</taxon>
        <taxon>Actinomycetota</taxon>
        <taxon>Actinomycetes</taxon>
        <taxon>Mycobacteriales</taxon>
        <taxon>Mycobacteriaceae</taxon>
        <taxon>Mycobacterium</taxon>
        <taxon>Mycobacterium tuberculosis complex</taxon>
    </lineage>
</organism>
<sequence length="504" mass="51821">MSFVVTVPEAVAAAAGDLAAIGSTLREATAAAAGPTTGLAAAAADDVSIAVSQLFGRYGQEFQTVSNQLAAFHTEFVRTLNRGAAAYLNTESANGGQLFGQIEAGQRAVSAAAAAAPGGAYGQLVANTATNLESLYGAWSANPFPFLRQIIANQQVYWQQIAAALANAVQNFPALVANLPAAIDAAVQQFLAFNAAYYIQQIISSQIGFAQLFATTVGQGVTSVIAGWPNLAAELQLAFQQLLVGDYNAAVANLGKAMTNLLVTGFDTSDVTIGTMGTTISVTAKPKLLGPLGDLFTIMTIPAQEAQYFTNLMPPSILRDMSQNFTNVLTTLSNPNIQAVASFDIATTAGTLSTFFGVPLVLTYATLGAPFASLNAIATSAETIEQALLAGNYLGAVGALIDAPAHALDGFLNSATVLDTPILVPTGLPSPLPPTVGITLHLPFDGILVPPHPVTATISFPGAPVPIPGFPTTVTVFGTPFMGMAPLLINYIPQQLALAIKPAA</sequence>
<evidence type="ECO:0000255" key="1"/>
<evidence type="ECO:0000269" key="2">
    <source>
    </source>
</evidence>
<evidence type="ECO:0000269" key="3">
    <source>
    </source>
</evidence>
<evidence type="ECO:0000269" key="4">
    <source>
    </source>
</evidence>
<evidence type="ECO:0000269" key="5">
    <source>
    </source>
</evidence>
<evidence type="ECO:0000305" key="6"/>
<evidence type="ECO:0000312" key="7">
    <source>
        <dbReference type="EMBL" id="CCP46641.1"/>
    </source>
</evidence>
<accession>L7N680</accession>
<accession>I6Y4K8</accession>
<feature type="chain" id="PRO_0000451249" description="PE-PGRS family protein PE_PGRS62">
    <location>
        <begin position="1"/>
        <end position="504"/>
    </location>
</feature>
<feature type="domain" description="PE" evidence="1">
    <location>
        <begin position="4"/>
        <end position="94"/>
    </location>
</feature>